<proteinExistence type="inferred from homology"/>
<protein>
    <recommendedName>
        <fullName evidence="1">Glycerol kinase</fullName>
        <ecNumber evidence="1">2.7.1.30</ecNumber>
    </recommendedName>
    <alternativeName>
        <fullName evidence="1">ATP:glycerol 3-phosphotransferase</fullName>
    </alternativeName>
    <alternativeName>
        <fullName evidence="1">Glycerokinase</fullName>
        <shortName evidence="1">GK</shortName>
    </alternativeName>
</protein>
<evidence type="ECO:0000255" key="1">
    <source>
        <dbReference type="HAMAP-Rule" id="MF_00186"/>
    </source>
</evidence>
<sequence length="499" mass="55276">MTDTQDKHYIIALDQGTTSSRAIIFDRDANVVGTSQREFAQHYPQAGWVEHDPMEIFATQSATMVEALAQAGISHAQVAALGITNQRETTVVWDKETGRPVYNAIVWQCRRSTEICAQLKRDGHEAYIRETTGLVTDPYFSGTKLKWILDNVEGARERAERGELLFGTIDTWLIWKFSGGKVHVTDYTNASRTLMFNIHSLQWDDKLLEILGIPRQMLPEVRPSSEVYGHTKSGIAIAGIAGDQQSALFGQMCVEPGQAKNTYGTGCFLLMNTGDQAVKSSHGLLTTIACGPRGEVAYALEGAVFNGGSTVQWLRDELKIVNDALDTEYFASKVKDSNGVYLVPAFTGLGAPYWDPYARGALFGLTRGVKVDHIIRAALESIAYQTRDVLDAMQQDCGQHLSELRVDGGAVANNFLMQFQADILGTCVERPQMRETTALGAAYLAGLACGFWSGLDELRDKAIIEREFSPQLDETQKEKLYAGWKKAVERTRDWEDHEA</sequence>
<name>GLPK_PSEPG</name>
<accession>B0KUG0</accession>
<organism>
    <name type="scientific">Pseudomonas putida (strain GB-1)</name>
    <dbReference type="NCBI Taxonomy" id="76869"/>
    <lineage>
        <taxon>Bacteria</taxon>
        <taxon>Pseudomonadati</taxon>
        <taxon>Pseudomonadota</taxon>
        <taxon>Gammaproteobacteria</taxon>
        <taxon>Pseudomonadales</taxon>
        <taxon>Pseudomonadaceae</taxon>
        <taxon>Pseudomonas</taxon>
    </lineage>
</organism>
<dbReference type="EC" id="2.7.1.30" evidence="1"/>
<dbReference type="EMBL" id="CP000926">
    <property type="protein sequence ID" value="ABZ00226.1"/>
    <property type="molecule type" value="Genomic_DNA"/>
</dbReference>
<dbReference type="RefSeq" id="WP_012273893.1">
    <property type="nucleotide sequence ID" value="NC_010322.1"/>
</dbReference>
<dbReference type="SMR" id="B0KUG0"/>
<dbReference type="KEGG" id="ppg:PputGB1_4337"/>
<dbReference type="eggNOG" id="COG0554">
    <property type="taxonomic scope" value="Bacteria"/>
</dbReference>
<dbReference type="HOGENOM" id="CLU_009281_2_3_6"/>
<dbReference type="UniPathway" id="UPA00618">
    <property type="reaction ID" value="UER00672"/>
</dbReference>
<dbReference type="Proteomes" id="UP000002157">
    <property type="component" value="Chromosome"/>
</dbReference>
<dbReference type="GO" id="GO:0005829">
    <property type="term" value="C:cytosol"/>
    <property type="evidence" value="ECO:0007669"/>
    <property type="project" value="TreeGrafter"/>
</dbReference>
<dbReference type="GO" id="GO:0005524">
    <property type="term" value="F:ATP binding"/>
    <property type="evidence" value="ECO:0007669"/>
    <property type="project" value="UniProtKB-UniRule"/>
</dbReference>
<dbReference type="GO" id="GO:0004370">
    <property type="term" value="F:glycerol kinase activity"/>
    <property type="evidence" value="ECO:0000250"/>
    <property type="project" value="UniProtKB"/>
</dbReference>
<dbReference type="GO" id="GO:0019563">
    <property type="term" value="P:glycerol catabolic process"/>
    <property type="evidence" value="ECO:0007669"/>
    <property type="project" value="UniProtKB-UniRule"/>
</dbReference>
<dbReference type="GO" id="GO:0006071">
    <property type="term" value="P:glycerol metabolic process"/>
    <property type="evidence" value="ECO:0000250"/>
    <property type="project" value="UniProtKB"/>
</dbReference>
<dbReference type="GO" id="GO:0006072">
    <property type="term" value="P:glycerol-3-phosphate metabolic process"/>
    <property type="evidence" value="ECO:0007669"/>
    <property type="project" value="InterPro"/>
</dbReference>
<dbReference type="CDD" id="cd07786">
    <property type="entry name" value="FGGY_EcGK_like"/>
    <property type="match status" value="1"/>
</dbReference>
<dbReference type="FunFam" id="3.30.420.40:FF:000007">
    <property type="entry name" value="Glycerol kinase"/>
    <property type="match status" value="1"/>
</dbReference>
<dbReference type="FunFam" id="3.30.420.40:FF:000008">
    <property type="entry name" value="Glycerol kinase"/>
    <property type="match status" value="1"/>
</dbReference>
<dbReference type="Gene3D" id="3.30.420.40">
    <property type="match status" value="2"/>
</dbReference>
<dbReference type="HAMAP" id="MF_00186">
    <property type="entry name" value="Glycerol_kin"/>
    <property type="match status" value="1"/>
</dbReference>
<dbReference type="InterPro" id="IPR043129">
    <property type="entry name" value="ATPase_NBD"/>
</dbReference>
<dbReference type="InterPro" id="IPR000577">
    <property type="entry name" value="Carb_kinase_FGGY"/>
</dbReference>
<dbReference type="InterPro" id="IPR018483">
    <property type="entry name" value="Carb_kinase_FGGY_CS"/>
</dbReference>
<dbReference type="InterPro" id="IPR018485">
    <property type="entry name" value="FGGY_C"/>
</dbReference>
<dbReference type="InterPro" id="IPR018484">
    <property type="entry name" value="FGGY_N"/>
</dbReference>
<dbReference type="InterPro" id="IPR005999">
    <property type="entry name" value="Glycerol_kin"/>
</dbReference>
<dbReference type="NCBIfam" id="TIGR01311">
    <property type="entry name" value="glycerol_kin"/>
    <property type="match status" value="1"/>
</dbReference>
<dbReference type="NCBIfam" id="NF000756">
    <property type="entry name" value="PRK00047.1"/>
    <property type="match status" value="1"/>
</dbReference>
<dbReference type="PANTHER" id="PTHR10196:SF69">
    <property type="entry name" value="GLYCEROL KINASE"/>
    <property type="match status" value="1"/>
</dbReference>
<dbReference type="PANTHER" id="PTHR10196">
    <property type="entry name" value="SUGAR KINASE"/>
    <property type="match status" value="1"/>
</dbReference>
<dbReference type="Pfam" id="PF02782">
    <property type="entry name" value="FGGY_C"/>
    <property type="match status" value="1"/>
</dbReference>
<dbReference type="Pfam" id="PF00370">
    <property type="entry name" value="FGGY_N"/>
    <property type="match status" value="1"/>
</dbReference>
<dbReference type="PIRSF" id="PIRSF000538">
    <property type="entry name" value="GlpK"/>
    <property type="match status" value="1"/>
</dbReference>
<dbReference type="SUPFAM" id="SSF53067">
    <property type="entry name" value="Actin-like ATPase domain"/>
    <property type="match status" value="2"/>
</dbReference>
<dbReference type="PROSITE" id="PS00933">
    <property type="entry name" value="FGGY_KINASES_1"/>
    <property type="match status" value="1"/>
</dbReference>
<dbReference type="PROSITE" id="PS00445">
    <property type="entry name" value="FGGY_KINASES_2"/>
    <property type="match status" value="1"/>
</dbReference>
<feature type="chain" id="PRO_1000077424" description="Glycerol kinase">
    <location>
        <begin position="1"/>
        <end position="499"/>
    </location>
</feature>
<feature type="binding site" evidence="1">
    <location>
        <position position="17"/>
    </location>
    <ligand>
        <name>ADP</name>
        <dbReference type="ChEBI" id="CHEBI:456216"/>
    </ligand>
</feature>
<feature type="binding site" evidence="1">
    <location>
        <position position="17"/>
    </location>
    <ligand>
        <name>ATP</name>
        <dbReference type="ChEBI" id="CHEBI:30616"/>
    </ligand>
</feature>
<feature type="binding site" evidence="1">
    <location>
        <position position="17"/>
    </location>
    <ligand>
        <name>sn-glycerol 3-phosphate</name>
        <dbReference type="ChEBI" id="CHEBI:57597"/>
    </ligand>
</feature>
<feature type="binding site" evidence="1">
    <location>
        <position position="18"/>
    </location>
    <ligand>
        <name>ATP</name>
        <dbReference type="ChEBI" id="CHEBI:30616"/>
    </ligand>
</feature>
<feature type="binding site" evidence="1">
    <location>
        <position position="19"/>
    </location>
    <ligand>
        <name>ATP</name>
        <dbReference type="ChEBI" id="CHEBI:30616"/>
    </ligand>
</feature>
<feature type="binding site" evidence="1">
    <location>
        <position position="21"/>
    </location>
    <ligand>
        <name>ADP</name>
        <dbReference type="ChEBI" id="CHEBI:456216"/>
    </ligand>
</feature>
<feature type="binding site" evidence="1">
    <location>
        <position position="87"/>
    </location>
    <ligand>
        <name>glycerol</name>
        <dbReference type="ChEBI" id="CHEBI:17754"/>
    </ligand>
</feature>
<feature type="binding site" evidence="1">
    <location>
        <position position="87"/>
    </location>
    <ligand>
        <name>sn-glycerol 3-phosphate</name>
        <dbReference type="ChEBI" id="CHEBI:57597"/>
    </ligand>
</feature>
<feature type="binding site" evidence="1">
    <location>
        <position position="88"/>
    </location>
    <ligand>
        <name>glycerol</name>
        <dbReference type="ChEBI" id="CHEBI:17754"/>
    </ligand>
</feature>
<feature type="binding site" evidence="1">
    <location>
        <position position="88"/>
    </location>
    <ligand>
        <name>sn-glycerol 3-phosphate</name>
        <dbReference type="ChEBI" id="CHEBI:57597"/>
    </ligand>
</feature>
<feature type="binding site" evidence="1">
    <location>
        <position position="139"/>
    </location>
    <ligand>
        <name>glycerol</name>
        <dbReference type="ChEBI" id="CHEBI:17754"/>
    </ligand>
</feature>
<feature type="binding site" evidence="1">
    <location>
        <position position="139"/>
    </location>
    <ligand>
        <name>sn-glycerol 3-phosphate</name>
        <dbReference type="ChEBI" id="CHEBI:57597"/>
    </ligand>
</feature>
<feature type="binding site" evidence="1">
    <location>
        <position position="243"/>
    </location>
    <ligand>
        <name>glycerol</name>
        <dbReference type="ChEBI" id="CHEBI:17754"/>
    </ligand>
</feature>
<feature type="binding site" evidence="1">
    <location>
        <position position="243"/>
    </location>
    <ligand>
        <name>sn-glycerol 3-phosphate</name>
        <dbReference type="ChEBI" id="CHEBI:57597"/>
    </ligand>
</feature>
<feature type="binding site" evidence="1">
    <location>
        <position position="244"/>
    </location>
    <ligand>
        <name>glycerol</name>
        <dbReference type="ChEBI" id="CHEBI:17754"/>
    </ligand>
</feature>
<feature type="binding site" evidence="1">
    <location>
        <position position="265"/>
    </location>
    <ligand>
        <name>ADP</name>
        <dbReference type="ChEBI" id="CHEBI:456216"/>
    </ligand>
</feature>
<feature type="binding site" evidence="1">
    <location>
        <position position="265"/>
    </location>
    <ligand>
        <name>ATP</name>
        <dbReference type="ChEBI" id="CHEBI:30616"/>
    </ligand>
</feature>
<feature type="binding site" evidence="1">
    <location>
        <position position="308"/>
    </location>
    <ligand>
        <name>ADP</name>
        <dbReference type="ChEBI" id="CHEBI:456216"/>
    </ligand>
</feature>
<feature type="binding site" evidence="1">
    <location>
        <position position="308"/>
    </location>
    <ligand>
        <name>ATP</name>
        <dbReference type="ChEBI" id="CHEBI:30616"/>
    </ligand>
</feature>
<feature type="binding site" evidence="1">
    <location>
        <position position="312"/>
    </location>
    <ligand>
        <name>ATP</name>
        <dbReference type="ChEBI" id="CHEBI:30616"/>
    </ligand>
</feature>
<feature type="binding site" evidence="1">
    <location>
        <position position="409"/>
    </location>
    <ligand>
        <name>ADP</name>
        <dbReference type="ChEBI" id="CHEBI:456216"/>
    </ligand>
</feature>
<feature type="binding site" evidence="1">
    <location>
        <position position="409"/>
    </location>
    <ligand>
        <name>ATP</name>
        <dbReference type="ChEBI" id="CHEBI:30616"/>
    </ligand>
</feature>
<feature type="binding site" evidence="1">
    <location>
        <position position="413"/>
    </location>
    <ligand>
        <name>ADP</name>
        <dbReference type="ChEBI" id="CHEBI:456216"/>
    </ligand>
</feature>
<keyword id="KW-0067">ATP-binding</keyword>
<keyword id="KW-0319">Glycerol metabolism</keyword>
<keyword id="KW-0418">Kinase</keyword>
<keyword id="KW-0547">Nucleotide-binding</keyword>
<keyword id="KW-0808">Transferase</keyword>
<comment type="function">
    <text evidence="1">Key enzyme in the regulation of glycerol uptake and metabolism. Catalyzes the phosphorylation of glycerol to yield sn-glycerol 3-phosphate.</text>
</comment>
<comment type="catalytic activity">
    <reaction evidence="1">
        <text>glycerol + ATP = sn-glycerol 3-phosphate + ADP + H(+)</text>
        <dbReference type="Rhea" id="RHEA:21644"/>
        <dbReference type="ChEBI" id="CHEBI:15378"/>
        <dbReference type="ChEBI" id="CHEBI:17754"/>
        <dbReference type="ChEBI" id="CHEBI:30616"/>
        <dbReference type="ChEBI" id="CHEBI:57597"/>
        <dbReference type="ChEBI" id="CHEBI:456216"/>
        <dbReference type="EC" id="2.7.1.30"/>
    </reaction>
</comment>
<comment type="activity regulation">
    <text evidence="1">Inhibited by fructose 1,6-bisphosphate (FBP).</text>
</comment>
<comment type="pathway">
    <text evidence="1">Polyol metabolism; glycerol degradation via glycerol kinase pathway; sn-glycerol 3-phosphate from glycerol: step 1/1.</text>
</comment>
<comment type="similarity">
    <text evidence="1">Belongs to the FGGY kinase family.</text>
</comment>
<reference key="1">
    <citation type="submission" date="2008-01" db="EMBL/GenBank/DDBJ databases">
        <title>Complete sequence of Pseudomonas putida GB-1.</title>
        <authorList>
            <consortium name="US DOE Joint Genome Institute"/>
            <person name="Copeland A."/>
            <person name="Lucas S."/>
            <person name="Lapidus A."/>
            <person name="Barry K."/>
            <person name="Glavina del Rio T."/>
            <person name="Dalin E."/>
            <person name="Tice H."/>
            <person name="Pitluck S."/>
            <person name="Bruce D."/>
            <person name="Goodwin L."/>
            <person name="Chertkov O."/>
            <person name="Brettin T."/>
            <person name="Detter J.C."/>
            <person name="Han C."/>
            <person name="Kuske C.R."/>
            <person name="Schmutz J."/>
            <person name="Larimer F."/>
            <person name="Land M."/>
            <person name="Hauser L."/>
            <person name="Kyrpides N."/>
            <person name="Kim E."/>
            <person name="McCarthy J.K."/>
            <person name="Richardson P."/>
        </authorList>
    </citation>
    <scope>NUCLEOTIDE SEQUENCE [LARGE SCALE GENOMIC DNA]</scope>
    <source>
        <strain>GB-1</strain>
    </source>
</reference>
<gene>
    <name evidence="1" type="primary">glpK</name>
    <name type="ordered locus">PputGB1_4337</name>
</gene>